<keyword id="KW-0997">Cell inner membrane</keyword>
<keyword id="KW-1003">Cell membrane</keyword>
<keyword id="KW-0472">Membrane</keyword>
<keyword id="KW-0511">Multifunctional enzyme</keyword>
<keyword id="KW-0520">NAD</keyword>
<keyword id="KW-0874">Quinone</keyword>
<keyword id="KW-1185">Reference proteome</keyword>
<keyword id="KW-1278">Translocase</keyword>
<keyword id="KW-0813">Transport</keyword>
<proteinExistence type="inferred from homology"/>
<sequence length="530" mass="60594">MQEIQFIVPAALHDEMLRLRNEKQMDFLESLTGMDWGVADEKDAPEKLRGLGVVYHLESTVTGERIALKTAVTDRERPEIPSVSDIWKIADFYEREVFDYYGIVFVGHPDMRRLYLRNDWVGYPMRKDNDPEKDNPLCMANEETFDTTQEIELNPDGTIKNREMKLFGEEEYVVNIGPQHPATHGVMRFRVSLEGEIIRKIDANCGYIHRGIEKMNESLTYPQTLALTDRLDYLGAHQNRHALCMCIEKAMGIEVSDRVKYIRTIMDELQRIDSHLLFYSALAMDLGALTAFFYGFRDREKILDIFEETCGGRLIMNYNTIGGVQADLHPNFVKRVKEFIPYMRGIIHEYHDIFTGNIIAQSRMKGVGVLSREDAISFGCTGGTGRASGWACDVRKRIPYGVYDKVDFQEIVYTEGDCFARYLVRMDEIMESLKIIEQLIDNIPEGPYQEKMKPIIRVPEGSYYAAVEGSRGEFGVFLESQGDKMPYRLHYRATGLPLVAAIDTICRGAKIADLIAIGGTLDYVVPDIDR</sequence>
<organism>
    <name type="scientific">Bacteroides thetaiotaomicron (strain ATCC 29148 / DSM 2079 / JCM 5827 / CCUG 10774 / NCTC 10582 / VPI-5482 / E50)</name>
    <dbReference type="NCBI Taxonomy" id="226186"/>
    <lineage>
        <taxon>Bacteria</taxon>
        <taxon>Pseudomonadati</taxon>
        <taxon>Bacteroidota</taxon>
        <taxon>Bacteroidia</taxon>
        <taxon>Bacteroidales</taxon>
        <taxon>Bacteroidaceae</taxon>
        <taxon>Bacteroides</taxon>
    </lineage>
</organism>
<reference key="1">
    <citation type="journal article" date="2003" name="Science">
        <title>A genomic view of the human-Bacteroides thetaiotaomicron symbiosis.</title>
        <authorList>
            <person name="Xu J."/>
            <person name="Bjursell M.K."/>
            <person name="Himrod J."/>
            <person name="Deng S."/>
            <person name="Carmichael L.K."/>
            <person name="Chiang H.C."/>
            <person name="Hooper L.V."/>
            <person name="Gordon J.I."/>
        </authorList>
    </citation>
    <scope>NUCLEOTIDE SEQUENCE [LARGE SCALE GENOMIC DNA]</scope>
    <source>
        <strain>ATCC 29148 / DSM 2079 / JCM 5827 / CCUG 10774 / NCTC 10582 / VPI-5482 / E50</strain>
    </source>
</reference>
<evidence type="ECO:0000250" key="1"/>
<evidence type="ECO:0000255" key="2">
    <source>
        <dbReference type="HAMAP-Rule" id="MF_01397"/>
    </source>
</evidence>
<evidence type="ECO:0000305" key="3"/>
<dbReference type="EC" id="7.1.1.-" evidence="2"/>
<dbReference type="EMBL" id="AE015928">
    <property type="protein sequence ID" value="AAO79170.1"/>
    <property type="status" value="ALT_INIT"/>
    <property type="molecule type" value="Genomic_DNA"/>
</dbReference>
<dbReference type="RefSeq" id="NP_812976.1">
    <property type="nucleotide sequence ID" value="NC_004663.1"/>
</dbReference>
<dbReference type="RefSeq" id="WP_008760950.1">
    <property type="nucleotide sequence ID" value="NC_004663.1"/>
</dbReference>
<dbReference type="SMR" id="Q8A0F6"/>
<dbReference type="FunCoup" id="Q8A0F6">
    <property type="interactions" value="334"/>
</dbReference>
<dbReference type="STRING" id="226186.BT_4065"/>
<dbReference type="PaxDb" id="226186-BT_4065"/>
<dbReference type="EnsemblBacteria" id="AAO79170">
    <property type="protein sequence ID" value="AAO79170"/>
    <property type="gene ID" value="BT_4065"/>
</dbReference>
<dbReference type="KEGG" id="bth:BT_4065"/>
<dbReference type="PATRIC" id="fig|226186.12.peg.4130"/>
<dbReference type="eggNOG" id="COG0649">
    <property type="taxonomic scope" value="Bacteria"/>
</dbReference>
<dbReference type="eggNOG" id="COG0852">
    <property type="taxonomic scope" value="Bacteria"/>
</dbReference>
<dbReference type="HOGENOM" id="CLU_015134_3_2_10"/>
<dbReference type="InParanoid" id="Q8A0F6"/>
<dbReference type="OrthoDB" id="9801496at2"/>
<dbReference type="Proteomes" id="UP000001414">
    <property type="component" value="Chromosome"/>
</dbReference>
<dbReference type="GO" id="GO:0030964">
    <property type="term" value="C:NADH dehydrogenase complex"/>
    <property type="evidence" value="ECO:0007669"/>
    <property type="project" value="InterPro"/>
</dbReference>
<dbReference type="GO" id="GO:0005886">
    <property type="term" value="C:plasma membrane"/>
    <property type="evidence" value="ECO:0007669"/>
    <property type="project" value="UniProtKB-SubCell"/>
</dbReference>
<dbReference type="GO" id="GO:0051287">
    <property type="term" value="F:NAD binding"/>
    <property type="evidence" value="ECO:0007669"/>
    <property type="project" value="InterPro"/>
</dbReference>
<dbReference type="GO" id="GO:0008137">
    <property type="term" value="F:NADH dehydrogenase (ubiquinone) activity"/>
    <property type="evidence" value="ECO:0007669"/>
    <property type="project" value="InterPro"/>
</dbReference>
<dbReference type="GO" id="GO:0050136">
    <property type="term" value="F:NADH:ubiquinone reductase (non-electrogenic) activity"/>
    <property type="evidence" value="ECO:0007669"/>
    <property type="project" value="UniProtKB-UniRule"/>
</dbReference>
<dbReference type="GO" id="GO:0048038">
    <property type="term" value="F:quinone binding"/>
    <property type="evidence" value="ECO:0007669"/>
    <property type="project" value="UniProtKB-KW"/>
</dbReference>
<dbReference type="Gene3D" id="1.10.645.10">
    <property type="entry name" value="Cytochrome-c3 Hydrogenase, chain B"/>
    <property type="match status" value="1"/>
</dbReference>
<dbReference type="Gene3D" id="3.30.460.80">
    <property type="entry name" value="NADH:ubiquinone oxidoreductase, 30kDa subunit"/>
    <property type="match status" value="1"/>
</dbReference>
<dbReference type="HAMAP" id="MF_01397">
    <property type="entry name" value="NDH1_NuoCD_2"/>
    <property type="match status" value="1"/>
</dbReference>
<dbReference type="HAMAP" id="MF_01358">
    <property type="entry name" value="NDH1_NuoD"/>
    <property type="match status" value="1"/>
</dbReference>
<dbReference type="InterPro" id="IPR001135">
    <property type="entry name" value="NADH_Q_OxRdtase_suD"/>
</dbReference>
<dbReference type="InterPro" id="IPR037232">
    <property type="entry name" value="NADH_quin_OxRdtase_su_C/D-like"/>
</dbReference>
<dbReference type="InterPro" id="IPR001268">
    <property type="entry name" value="NADH_UbQ_OxRdtase_30kDa_su"/>
</dbReference>
<dbReference type="InterPro" id="IPR020396">
    <property type="entry name" value="NADH_UbQ_OxRdtase_CS"/>
</dbReference>
<dbReference type="InterPro" id="IPR026662">
    <property type="entry name" value="NDH-1_subunit_CD"/>
</dbReference>
<dbReference type="InterPro" id="IPR022885">
    <property type="entry name" value="NDH1_su_D/H"/>
</dbReference>
<dbReference type="InterPro" id="IPR029014">
    <property type="entry name" value="NiFe-Hase_large"/>
</dbReference>
<dbReference type="NCBIfam" id="NF004739">
    <property type="entry name" value="PRK06075.1"/>
    <property type="match status" value="1"/>
</dbReference>
<dbReference type="PANTHER" id="PTHR11993:SF10">
    <property type="entry name" value="NADH DEHYDROGENASE [UBIQUINONE] IRON-SULFUR PROTEIN 2, MITOCHONDRIAL"/>
    <property type="match status" value="1"/>
</dbReference>
<dbReference type="PANTHER" id="PTHR11993">
    <property type="entry name" value="NADH-UBIQUINONE OXIDOREDUCTASE 49 KDA SUBUNIT"/>
    <property type="match status" value="1"/>
</dbReference>
<dbReference type="Pfam" id="PF00329">
    <property type="entry name" value="Complex1_30kDa"/>
    <property type="match status" value="1"/>
</dbReference>
<dbReference type="Pfam" id="PF00346">
    <property type="entry name" value="Complex1_49kDa"/>
    <property type="match status" value="1"/>
</dbReference>
<dbReference type="SUPFAM" id="SSF56762">
    <property type="entry name" value="HydB/Nqo4-like"/>
    <property type="match status" value="1"/>
</dbReference>
<dbReference type="SUPFAM" id="SSF143243">
    <property type="entry name" value="Nqo5-like"/>
    <property type="match status" value="1"/>
</dbReference>
<dbReference type="PROSITE" id="PS00542">
    <property type="entry name" value="COMPLEX1_30K"/>
    <property type="match status" value="1"/>
</dbReference>
<comment type="function">
    <text evidence="1">NDH-1 shuttles electrons from NADH, via FMN and iron-sulfur (Fe-S) centers, to quinones in the respiratory chain. The immediate electron acceptor for the enzyme in this species is believed to be a menaquinone. Couples the redox reaction to proton translocation (for every two electrons transferred, four hydrogen ions are translocated across the cytoplasmic membrane), and thus conserves the redox energy in a proton gradient (By similarity).</text>
</comment>
<comment type="catalytic activity">
    <reaction evidence="2">
        <text>a quinone + NADH + 5 H(+)(in) = a quinol + NAD(+) + 4 H(+)(out)</text>
        <dbReference type="Rhea" id="RHEA:57888"/>
        <dbReference type="ChEBI" id="CHEBI:15378"/>
        <dbReference type="ChEBI" id="CHEBI:24646"/>
        <dbReference type="ChEBI" id="CHEBI:57540"/>
        <dbReference type="ChEBI" id="CHEBI:57945"/>
        <dbReference type="ChEBI" id="CHEBI:132124"/>
    </reaction>
</comment>
<comment type="subunit">
    <text evidence="2">NDH-1 is composed of 13 different subunits. Subunits NuoB, CD, E, F, and G constitute the peripheral sector of the complex.</text>
</comment>
<comment type="subcellular location">
    <subcellularLocation>
        <location evidence="2">Cell inner membrane</location>
        <topology evidence="2">Peripheral membrane protein</topology>
        <orientation evidence="1">Cytoplasmic side</orientation>
    </subcellularLocation>
</comment>
<comment type="similarity">
    <text evidence="2">In the N-terminal section; belongs to the complex I 30 kDa subunit family.</text>
</comment>
<comment type="similarity">
    <text evidence="2">In the C-terminal section; belongs to the complex I 49 kDa subunit family.</text>
</comment>
<comment type="sequence caution" evidence="3">
    <conflict type="erroneous initiation">
        <sequence resource="EMBL-CDS" id="AAO79170"/>
    </conflict>
</comment>
<protein>
    <recommendedName>
        <fullName evidence="2">NADH-quinone oxidoreductase subunit C/D</fullName>
        <ecNumber evidence="2">7.1.1.-</ecNumber>
    </recommendedName>
    <alternativeName>
        <fullName evidence="2">NADH dehydrogenase I subunit C/D</fullName>
    </alternativeName>
    <alternativeName>
        <fullName evidence="2">NDH-1 subunit C/D</fullName>
    </alternativeName>
</protein>
<gene>
    <name evidence="2" type="primary">nuoC</name>
    <name type="synonym">nuoCD</name>
    <name type="synonym">nuoD</name>
    <name type="ordered locus">BT_4065</name>
</gene>
<name>NUOCD_BACTN</name>
<accession>Q8A0F6</accession>
<feature type="chain" id="PRO_0000358618" description="NADH-quinone oxidoreductase subunit C/D">
    <location>
        <begin position="1"/>
        <end position="530"/>
    </location>
</feature>
<feature type="region of interest" description="NADH dehydrogenase I subunit C" evidence="2">
    <location>
        <begin position="1"/>
        <end position="144"/>
    </location>
</feature>
<feature type="region of interest" description="NADH dehydrogenase I subunit D" evidence="2">
    <location>
        <begin position="171"/>
        <end position="530"/>
    </location>
</feature>